<sequence length="424" mass="47917">MDDAEVDHTKPIPAYYCCYLLRSTKQRTSLYIGSTPHPARRLAQHNGESKGGARKTAKDDKRPWEMVLLVEGFTSRVGALQFEWAWQNPRMSSQHPANRHQFDLETGDVAGTSGVQPSTEAGKAKHRGRGSRRSLKAHLEDLHLFLRSTYFSKWPLRLRFFNRDVYQLWTTWCDRVDALLPEHVRTILDGDCPKDHLSWADEPRVGSVEHIKVDYSDIYDYVEKSHFLLDDPSDLRCKICQAKIALSEELALVCPRASCYCISHLLCLSSRFLDHAEEPEQLVPIDGICPLCNKVIQWSTMMQELSLRTRGHNEFRAILRKAKRGRAKAHGSVHEASAPDGVASAVENPGSRAACVESASVGVSDSLDVDNHDDASLDENWTESLDLDPNPDELLNRPKDHKMESSRVEIIIDDSDCEEMEDLG</sequence>
<reference key="1">
    <citation type="journal article" date="2007" name="Nat. Biotechnol.">
        <title>Genome sequencing and analysis of the versatile cell factory Aspergillus niger CBS 513.88.</title>
        <authorList>
            <person name="Pel H.J."/>
            <person name="de Winde J.H."/>
            <person name="Archer D.B."/>
            <person name="Dyer P.S."/>
            <person name="Hofmann G."/>
            <person name="Schaap P.J."/>
            <person name="Turner G."/>
            <person name="de Vries R.P."/>
            <person name="Albang R."/>
            <person name="Albermann K."/>
            <person name="Andersen M.R."/>
            <person name="Bendtsen J.D."/>
            <person name="Benen J.A.E."/>
            <person name="van den Berg M."/>
            <person name="Breestraat S."/>
            <person name="Caddick M.X."/>
            <person name="Contreras R."/>
            <person name="Cornell M."/>
            <person name="Coutinho P.M."/>
            <person name="Danchin E.G.J."/>
            <person name="Debets A.J.M."/>
            <person name="Dekker P."/>
            <person name="van Dijck P.W.M."/>
            <person name="van Dijk A."/>
            <person name="Dijkhuizen L."/>
            <person name="Driessen A.J.M."/>
            <person name="d'Enfert C."/>
            <person name="Geysens S."/>
            <person name="Goosen C."/>
            <person name="Groot G.S.P."/>
            <person name="de Groot P.W.J."/>
            <person name="Guillemette T."/>
            <person name="Henrissat B."/>
            <person name="Herweijer M."/>
            <person name="van den Hombergh J.P.T.W."/>
            <person name="van den Hondel C.A.M.J.J."/>
            <person name="van der Heijden R.T.J.M."/>
            <person name="van der Kaaij R.M."/>
            <person name="Klis F.M."/>
            <person name="Kools H.J."/>
            <person name="Kubicek C.P."/>
            <person name="van Kuyk P.A."/>
            <person name="Lauber J."/>
            <person name="Lu X."/>
            <person name="van der Maarel M.J.E.C."/>
            <person name="Meulenberg R."/>
            <person name="Menke H."/>
            <person name="Mortimer M.A."/>
            <person name="Nielsen J."/>
            <person name="Oliver S.G."/>
            <person name="Olsthoorn M."/>
            <person name="Pal K."/>
            <person name="van Peij N.N.M.E."/>
            <person name="Ram A.F.J."/>
            <person name="Rinas U."/>
            <person name="Roubos J.A."/>
            <person name="Sagt C.M.J."/>
            <person name="Schmoll M."/>
            <person name="Sun J."/>
            <person name="Ussery D."/>
            <person name="Varga J."/>
            <person name="Vervecken W."/>
            <person name="van de Vondervoort P.J.J."/>
            <person name="Wedler H."/>
            <person name="Woesten H.A.B."/>
            <person name="Zeng A.-P."/>
            <person name="van Ooyen A.J.J."/>
            <person name="Visser J."/>
            <person name="Stam H."/>
        </authorList>
    </citation>
    <scope>NUCLEOTIDE SEQUENCE [LARGE SCALE GENOMIC DNA]</scope>
    <source>
        <strain>ATCC MYA-4892 / CBS 513.88 / FGSC A1513</strain>
    </source>
</reference>
<accession>A2QUJ2</accession>
<evidence type="ECO:0000255" key="1">
    <source>
        <dbReference type="HAMAP-Rule" id="MF_03100"/>
    </source>
</evidence>
<evidence type="ECO:0000256" key="2">
    <source>
        <dbReference type="SAM" id="MobiDB-lite"/>
    </source>
</evidence>
<keyword id="KW-0227">DNA damage</keyword>
<keyword id="KW-0233">DNA recombination</keyword>
<keyword id="KW-0234">DNA repair</keyword>
<keyword id="KW-0255">Endonuclease</keyword>
<keyword id="KW-0378">Hydrolase</keyword>
<keyword id="KW-0479">Metal-binding</keyword>
<keyword id="KW-0540">Nuclease</keyword>
<keyword id="KW-0539">Nucleus</keyword>
<keyword id="KW-1185">Reference proteome</keyword>
<keyword id="KW-0862">Zinc</keyword>
<keyword id="KW-0863">Zinc-finger</keyword>
<feature type="chain" id="PRO_0000383775" description="Structure-specific endonuclease subunit slx1">
    <location>
        <begin position="1"/>
        <end position="424"/>
    </location>
</feature>
<feature type="domain" description="GIY-YIG" evidence="1">
    <location>
        <begin position="14"/>
        <end position="99"/>
    </location>
</feature>
<feature type="zinc finger region" description="SLX1-type" evidence="1">
    <location>
        <begin position="237"/>
        <end position="292"/>
    </location>
</feature>
<feature type="region of interest" description="Disordered" evidence="2">
    <location>
        <begin position="36"/>
        <end position="59"/>
    </location>
</feature>
<feature type="region of interest" description="Disordered" evidence="2">
    <location>
        <begin position="109"/>
        <end position="132"/>
    </location>
</feature>
<feature type="region of interest" description="Disordered" evidence="2">
    <location>
        <begin position="381"/>
        <end position="424"/>
    </location>
</feature>
<feature type="compositionally biased region" description="Acidic residues" evidence="2">
    <location>
        <begin position="381"/>
        <end position="391"/>
    </location>
</feature>
<feature type="compositionally biased region" description="Basic and acidic residues" evidence="2">
    <location>
        <begin position="394"/>
        <end position="407"/>
    </location>
</feature>
<feature type="compositionally biased region" description="Acidic residues" evidence="2">
    <location>
        <begin position="411"/>
        <end position="424"/>
    </location>
</feature>
<organism>
    <name type="scientific">Aspergillus niger (strain ATCC MYA-4892 / CBS 513.88 / FGSC A1513)</name>
    <dbReference type="NCBI Taxonomy" id="425011"/>
    <lineage>
        <taxon>Eukaryota</taxon>
        <taxon>Fungi</taxon>
        <taxon>Dikarya</taxon>
        <taxon>Ascomycota</taxon>
        <taxon>Pezizomycotina</taxon>
        <taxon>Eurotiomycetes</taxon>
        <taxon>Eurotiomycetidae</taxon>
        <taxon>Eurotiales</taxon>
        <taxon>Aspergillaceae</taxon>
        <taxon>Aspergillus</taxon>
        <taxon>Aspergillus subgen. Circumdati</taxon>
    </lineage>
</organism>
<gene>
    <name type="primary">slx1</name>
    <name type="ORF">An09g05830</name>
</gene>
<dbReference type="EC" id="3.1.-.-" evidence="1"/>
<dbReference type="EMBL" id="AM270207">
    <property type="protein sequence ID" value="CAK40390.1"/>
    <property type="molecule type" value="Genomic_DNA"/>
</dbReference>
<dbReference type="SMR" id="A2QUJ2"/>
<dbReference type="EnsemblFungi" id="CAK40390">
    <property type="protein sequence ID" value="CAK40390"/>
    <property type="gene ID" value="An09g05830"/>
</dbReference>
<dbReference type="VEuPathDB" id="FungiDB:An09g05830"/>
<dbReference type="HOGENOM" id="CLU_030739_1_0_1"/>
<dbReference type="Proteomes" id="UP000006706">
    <property type="component" value="Chromosome 1L"/>
</dbReference>
<dbReference type="GO" id="GO:0033557">
    <property type="term" value="C:Slx1-Slx4 complex"/>
    <property type="evidence" value="ECO:0007669"/>
    <property type="project" value="UniProtKB-UniRule"/>
</dbReference>
<dbReference type="GO" id="GO:0017108">
    <property type="term" value="F:5'-flap endonuclease activity"/>
    <property type="evidence" value="ECO:0007669"/>
    <property type="project" value="InterPro"/>
</dbReference>
<dbReference type="GO" id="GO:0008821">
    <property type="term" value="F:crossover junction DNA endonuclease activity"/>
    <property type="evidence" value="ECO:0007669"/>
    <property type="project" value="TreeGrafter"/>
</dbReference>
<dbReference type="GO" id="GO:0008270">
    <property type="term" value="F:zinc ion binding"/>
    <property type="evidence" value="ECO:0007669"/>
    <property type="project" value="UniProtKB-KW"/>
</dbReference>
<dbReference type="GO" id="GO:0000724">
    <property type="term" value="P:double-strand break repair via homologous recombination"/>
    <property type="evidence" value="ECO:0007669"/>
    <property type="project" value="TreeGrafter"/>
</dbReference>
<dbReference type="CDD" id="cd10455">
    <property type="entry name" value="GIY-YIG_SLX1"/>
    <property type="match status" value="1"/>
</dbReference>
<dbReference type="FunFam" id="3.40.1440.10:FF:000006">
    <property type="entry name" value="Structure-specific endonuclease subunit SLX1"/>
    <property type="match status" value="1"/>
</dbReference>
<dbReference type="Gene3D" id="3.40.1440.10">
    <property type="entry name" value="GIY-YIG endonuclease"/>
    <property type="match status" value="1"/>
</dbReference>
<dbReference type="Gene3D" id="3.30.40.10">
    <property type="entry name" value="Zinc/RING finger domain, C3HC4 (zinc finger)"/>
    <property type="match status" value="1"/>
</dbReference>
<dbReference type="HAMAP" id="MF_03100">
    <property type="entry name" value="Endonuc_su_Slx1"/>
    <property type="match status" value="1"/>
</dbReference>
<dbReference type="InterPro" id="IPR000305">
    <property type="entry name" value="GIY-YIG_endonuc"/>
</dbReference>
<dbReference type="InterPro" id="IPR035901">
    <property type="entry name" value="GIY-YIG_endonuc_sf"/>
</dbReference>
<dbReference type="InterPro" id="IPR027520">
    <property type="entry name" value="Slx1"/>
</dbReference>
<dbReference type="InterPro" id="IPR048749">
    <property type="entry name" value="SLX1_C"/>
</dbReference>
<dbReference type="InterPro" id="IPR050381">
    <property type="entry name" value="SLX1_endonuclease"/>
</dbReference>
<dbReference type="InterPro" id="IPR013083">
    <property type="entry name" value="Znf_RING/FYVE/PHD"/>
</dbReference>
<dbReference type="PANTHER" id="PTHR20208">
    <property type="entry name" value="STRUCTURE-SPECIFIC ENDONUCLEASE SUBUNIT SLX1"/>
    <property type="match status" value="1"/>
</dbReference>
<dbReference type="PANTHER" id="PTHR20208:SF10">
    <property type="entry name" value="STRUCTURE-SPECIFIC ENDONUCLEASE SUBUNIT SLX1"/>
    <property type="match status" value="1"/>
</dbReference>
<dbReference type="Pfam" id="PF01541">
    <property type="entry name" value="GIY-YIG"/>
    <property type="match status" value="1"/>
</dbReference>
<dbReference type="Pfam" id="PF21202">
    <property type="entry name" value="SLX1_C"/>
    <property type="match status" value="1"/>
</dbReference>
<dbReference type="SUPFAM" id="SSF82771">
    <property type="entry name" value="GIY-YIG endonuclease"/>
    <property type="match status" value="1"/>
</dbReference>
<dbReference type="PROSITE" id="PS50164">
    <property type="entry name" value="GIY_YIG"/>
    <property type="match status" value="1"/>
</dbReference>
<protein>
    <recommendedName>
        <fullName evidence="1">Structure-specific endonuclease subunit slx1</fullName>
        <ecNumber evidence="1">3.1.-.-</ecNumber>
    </recommendedName>
</protein>
<name>SLX1_ASPNC</name>
<proteinExistence type="inferred from homology"/>
<comment type="function">
    <text evidence="1">Catalytic subunit of the slx1-slx4 structure-specific endonuclease that resolves DNA secondary structures generated during DNA repair and recombination. Has endonuclease activity towards branched DNA substrates, introducing single-strand cuts in duplex DNA close to junctions with ss-DNA.</text>
</comment>
<comment type="cofactor">
    <cofactor evidence="1">
        <name>a divalent metal cation</name>
        <dbReference type="ChEBI" id="CHEBI:60240"/>
    </cofactor>
</comment>
<comment type="subunit">
    <text evidence="1">Forms a heterodimer with slx4.</text>
</comment>
<comment type="subcellular location">
    <subcellularLocation>
        <location evidence="1">Nucleus</location>
    </subcellularLocation>
</comment>
<comment type="similarity">
    <text evidence="1">Belongs to the SLX1 family.</text>
</comment>